<feature type="chain" id="PRO_0000375375" description="YcgL domain-containing protein Sputcn32_1766">
    <location>
        <begin position="1"/>
        <end position="92"/>
    </location>
</feature>
<feature type="domain" description="YcgL" evidence="1">
    <location>
        <begin position="1"/>
        <end position="85"/>
    </location>
</feature>
<organism>
    <name type="scientific">Shewanella putrefaciens (strain CN-32 / ATCC BAA-453)</name>
    <dbReference type="NCBI Taxonomy" id="319224"/>
    <lineage>
        <taxon>Bacteria</taxon>
        <taxon>Pseudomonadati</taxon>
        <taxon>Pseudomonadota</taxon>
        <taxon>Gammaproteobacteria</taxon>
        <taxon>Alteromonadales</taxon>
        <taxon>Shewanellaceae</taxon>
        <taxon>Shewanella</taxon>
    </lineage>
</organism>
<reference key="1">
    <citation type="submission" date="2007-04" db="EMBL/GenBank/DDBJ databases">
        <title>Complete sequence of Shewanella putrefaciens CN-32.</title>
        <authorList>
            <consortium name="US DOE Joint Genome Institute"/>
            <person name="Copeland A."/>
            <person name="Lucas S."/>
            <person name="Lapidus A."/>
            <person name="Barry K."/>
            <person name="Detter J.C."/>
            <person name="Glavina del Rio T."/>
            <person name="Hammon N."/>
            <person name="Israni S."/>
            <person name="Dalin E."/>
            <person name="Tice H."/>
            <person name="Pitluck S."/>
            <person name="Chain P."/>
            <person name="Malfatti S."/>
            <person name="Shin M."/>
            <person name="Vergez L."/>
            <person name="Schmutz J."/>
            <person name="Larimer F."/>
            <person name="Land M."/>
            <person name="Hauser L."/>
            <person name="Kyrpides N."/>
            <person name="Mikhailova N."/>
            <person name="Romine M.F."/>
            <person name="Fredrickson J."/>
            <person name="Tiedje J."/>
            <person name="Richardson P."/>
        </authorList>
    </citation>
    <scope>NUCLEOTIDE SEQUENCE [LARGE SCALE GENOMIC DNA]</scope>
    <source>
        <strain>CN-32 / ATCC BAA-453</strain>
    </source>
</reference>
<protein>
    <recommendedName>
        <fullName evidence="1">YcgL domain-containing protein Sputcn32_1766</fullName>
    </recommendedName>
</protein>
<name>Y1766_SHEPC</name>
<sequence>MLCTVYKSTRKADTYLFVKKRDCFDDVPEALMAMFGTPQLVMVFPIAKRESLGMADIHKVRAAIDENGYYLQIPPPQVNLLAEHKRNLGLQD</sequence>
<evidence type="ECO:0000255" key="1">
    <source>
        <dbReference type="HAMAP-Rule" id="MF_01866"/>
    </source>
</evidence>
<gene>
    <name type="ordered locus">Sputcn32_1766</name>
</gene>
<proteinExistence type="inferred from homology"/>
<dbReference type="EMBL" id="CP000681">
    <property type="protein sequence ID" value="ABP75491.1"/>
    <property type="molecule type" value="Genomic_DNA"/>
</dbReference>
<dbReference type="SMR" id="A4Y6A8"/>
<dbReference type="STRING" id="319224.Sputcn32_1766"/>
<dbReference type="KEGG" id="spc:Sputcn32_1766"/>
<dbReference type="eggNOG" id="COG3100">
    <property type="taxonomic scope" value="Bacteria"/>
</dbReference>
<dbReference type="HOGENOM" id="CLU_155118_1_0_6"/>
<dbReference type="Gene3D" id="3.10.510.20">
    <property type="entry name" value="YcgL domain"/>
    <property type="match status" value="1"/>
</dbReference>
<dbReference type="HAMAP" id="MF_01866">
    <property type="entry name" value="UPF0745"/>
    <property type="match status" value="1"/>
</dbReference>
<dbReference type="InterPro" id="IPR038068">
    <property type="entry name" value="YcgL-like_sf"/>
</dbReference>
<dbReference type="InterPro" id="IPR027354">
    <property type="entry name" value="YcgL_dom"/>
</dbReference>
<dbReference type="PANTHER" id="PTHR38109">
    <property type="entry name" value="PROTEIN YCGL"/>
    <property type="match status" value="1"/>
</dbReference>
<dbReference type="PANTHER" id="PTHR38109:SF1">
    <property type="entry name" value="PROTEIN YCGL"/>
    <property type="match status" value="1"/>
</dbReference>
<dbReference type="Pfam" id="PF05166">
    <property type="entry name" value="YcgL"/>
    <property type="match status" value="1"/>
</dbReference>
<dbReference type="SUPFAM" id="SSF160191">
    <property type="entry name" value="YcgL-like"/>
    <property type="match status" value="1"/>
</dbReference>
<dbReference type="PROSITE" id="PS51648">
    <property type="entry name" value="YCGL"/>
    <property type="match status" value="1"/>
</dbReference>
<accession>A4Y6A8</accession>